<comment type="function">
    <text evidence="8 9 10 11">V region of the variable domain of immunoglobulin heavy chains that participates in the antigen recognition (PubMed:24600447). Immunoglobulins, also known as antibodies, are membrane-bound or secreted glycoproteins produced by B lymphocytes. In the recognition phase of humoral immunity, the membrane-bound immunoglobulins serve as receptors which, upon binding of a specific antigen, trigger the clonal expansion and differentiation of B lymphocytes into immunoglobulins-secreting plasma cells. Secreted immunoglobulins mediate the effector phase of humoral immunity, which results in the elimination of bound antigens (PubMed:20176268, PubMed:22158414). The antigen binding site is formed by the variable domain of one heavy chain, together with that of its associated light chain. Thus, each immunoglobulin has two antigen binding sites with remarkable affinity for a particular antigen. The variable domains are assembled by a process called V-(D)-J rearrangement and can then be subjected to somatic hypermutations which, after exposure to antigen and selection, allow affinity maturation for a particular antigen (PubMed:17576170, PubMed:20176268).</text>
</comment>
<comment type="subunit">
    <text evidence="9">Immunoglobulins are composed of two identical heavy chains and two identical light chains; disulfide-linked.</text>
</comment>
<comment type="subcellular location">
    <subcellularLocation>
        <location evidence="9 10">Secreted</location>
    </subcellularLocation>
    <subcellularLocation>
        <location evidence="9 10">Cell membrane</location>
    </subcellularLocation>
</comment>
<comment type="polymorphism">
    <text evidence="13">There are several alleles. The sequence shown is that of IMGT allele IGHV1-2*04.</text>
</comment>
<comment type="caution">
    <text evidence="13">For examples of full-length immunoglobulin heavy chains (of different isotypes) see AC P0DOX2, AC P0DOX3, AC P0DOX4, AC P0DOX5 and AC P0DOX6.</text>
</comment>
<sequence>MDWTWRILFLVAAATGAHSQVQLVQSGAEVKKPGASVKVSCKASGYTFTGYYMHWVRQAPGQGLEWMGWINPNSGGTNYAQKFQGWVTMTRDTSISTAYMELSRLRSDDTAVYYCAR</sequence>
<keyword id="KW-0002">3D-structure</keyword>
<keyword id="KW-1064">Adaptive immunity</keyword>
<keyword id="KW-1003">Cell membrane</keyword>
<keyword id="KW-0903">Direct protein sequencing</keyword>
<keyword id="KW-1015">Disulfide bond</keyword>
<keyword id="KW-0391">Immunity</keyword>
<keyword id="KW-1280">Immunoglobulin</keyword>
<keyword id="KW-0393">Immunoglobulin domain</keyword>
<keyword id="KW-0472">Membrane</keyword>
<keyword id="KW-1267">Proteomics identification</keyword>
<keyword id="KW-0873">Pyrrolidone carboxylic acid</keyword>
<keyword id="KW-1185">Reference proteome</keyword>
<keyword id="KW-0964">Secreted</keyword>
<keyword id="KW-0732">Signal</keyword>
<name>HV102_HUMAN</name>
<reference key="1">
    <citation type="journal article" date="1988" name="EMBO J.">
        <title>Dispersed localization of D segments in the human immunoglobulin heavy-chain locus.</title>
        <authorList>
            <person name="Matsuda F."/>
            <person name="Lee K.H."/>
            <person name="Nakai S."/>
            <person name="Sato T."/>
            <person name="Kodaira M."/>
            <person name="Zong S.Q."/>
            <person name="Ohno H."/>
            <person name="Fukuhara S."/>
            <person name="Honjo T."/>
        </authorList>
    </citation>
    <scope>NUCLEOTIDE SEQUENCE [GENOMIC DNA] (IMGT ALLELE IGHV1-2*01)</scope>
    <scope>VARIANTS ARG-69; ARG-86; SER-89 AND VAL-111</scope>
</reference>
<reference key="2">
    <citation type="journal article" date="2003" name="Nature">
        <title>The DNA sequence and analysis of human chromosome 14.</title>
        <authorList>
            <person name="Heilig R."/>
            <person name="Eckenberg R."/>
            <person name="Petit J.-L."/>
            <person name="Fonknechten N."/>
            <person name="Da Silva C."/>
            <person name="Cattolico L."/>
            <person name="Levy M."/>
            <person name="Barbe V."/>
            <person name="De Berardinis V."/>
            <person name="Ureta-Vidal A."/>
            <person name="Pelletier E."/>
            <person name="Vico V."/>
            <person name="Anthouard V."/>
            <person name="Rowen L."/>
            <person name="Madan A."/>
            <person name="Qin S."/>
            <person name="Sun H."/>
            <person name="Du H."/>
            <person name="Pepin K."/>
            <person name="Artiguenave F."/>
            <person name="Robert C."/>
            <person name="Cruaud C."/>
            <person name="Bruels T."/>
            <person name="Jaillon O."/>
            <person name="Friedlander L."/>
            <person name="Samson G."/>
            <person name="Brottier P."/>
            <person name="Cure S."/>
            <person name="Segurens B."/>
            <person name="Aniere F."/>
            <person name="Samain S."/>
            <person name="Crespeau H."/>
            <person name="Abbasi N."/>
            <person name="Aiach N."/>
            <person name="Boscus D."/>
            <person name="Dickhoff R."/>
            <person name="Dors M."/>
            <person name="Dubois I."/>
            <person name="Friedman C."/>
            <person name="Gouyvenoux M."/>
            <person name="James R."/>
            <person name="Madan A."/>
            <person name="Mairey-Estrada B."/>
            <person name="Mangenot S."/>
            <person name="Martins N."/>
            <person name="Menard M."/>
            <person name="Oztas S."/>
            <person name="Ratcliffe A."/>
            <person name="Shaffer T."/>
            <person name="Trask B."/>
            <person name="Vacherie B."/>
            <person name="Bellemere C."/>
            <person name="Belser C."/>
            <person name="Besnard-Gonnet M."/>
            <person name="Bartol-Mavel D."/>
            <person name="Boutard M."/>
            <person name="Briez-Silla S."/>
            <person name="Combette S."/>
            <person name="Dufosse-Laurent V."/>
            <person name="Ferron C."/>
            <person name="Lechaplais C."/>
            <person name="Louesse C."/>
            <person name="Muselet D."/>
            <person name="Magdelenat G."/>
            <person name="Pateau E."/>
            <person name="Petit E."/>
            <person name="Sirvain-Trukniewicz P."/>
            <person name="Trybou A."/>
            <person name="Vega-Czarny N."/>
            <person name="Bataille E."/>
            <person name="Bluet E."/>
            <person name="Bordelais I."/>
            <person name="Dubois M."/>
            <person name="Dumont C."/>
            <person name="Guerin T."/>
            <person name="Haffray S."/>
            <person name="Hammadi R."/>
            <person name="Muanga J."/>
            <person name="Pellouin V."/>
            <person name="Robert D."/>
            <person name="Wunderle E."/>
            <person name="Gauguet G."/>
            <person name="Roy A."/>
            <person name="Sainte-Marthe L."/>
            <person name="Verdier J."/>
            <person name="Verdier-Discala C."/>
            <person name="Hillier L.W."/>
            <person name="Fulton L."/>
            <person name="McPherson J."/>
            <person name="Matsuda F."/>
            <person name="Wilson R."/>
            <person name="Scarpelli C."/>
            <person name="Gyapay G."/>
            <person name="Wincker P."/>
            <person name="Saurin W."/>
            <person name="Quetier F."/>
            <person name="Waterston R."/>
            <person name="Hood L."/>
            <person name="Weissenbach J."/>
        </authorList>
    </citation>
    <scope>NUCLEOTIDE SEQUENCE [LARGE SCALE GENOMIC DNA] (IMGT ALLELE IGHV1-2*04)</scope>
</reference>
<reference key="3">
    <citation type="journal article" date="1982" name="Proc. Natl. Acad. Sci. U.S.A.">
        <title>Cloning and sequence determination of the gene for the human immunoglobulin epsilon chain expressed in a myeloma cell line.</title>
        <authorList>
            <person name="Kenten J.H."/>
            <person name="Molgaard H.V."/>
            <person name="Houghton M."/>
            <person name="Derbyshire R.B."/>
            <person name="Viney J."/>
            <person name="Bell L.O."/>
            <person name="Gould H.J."/>
        </authorList>
    </citation>
    <scope>NUCLEOTIDE SEQUENCE [MRNA]</scope>
    <scope>VARIANT ARG-86</scope>
</reference>
<reference key="4">
    <citation type="book" date="1978" name="Immediate hypersensitivity: modern concepts and developments">
        <editorList>
            <person name="Bach M.K."/>
        </editorList>
        <authorList>
            <person name="Bennich H.H."/>
            <person name="Johansson S.G.O."/>
            <person name="von Bahr-Lindstrom H."/>
        </authorList>
    </citation>
    <scope>PROTEIN SEQUENCE OF 20-117</scope>
    <scope>PYROGLUTAMATE FORMATION AT GLN-20</scope>
</reference>
<reference key="5">
    <citation type="journal article" date="1993" name="Eur. J. Immunol.">
        <title>Nucleotidic sequence analysis of the variable domains of four human monoclonal IgM with an antibody activity to myelin-associated glycoprotein.</title>
        <authorList>
            <person name="Mariette X."/>
            <person name="Tsapis A."/>
            <person name="Brouet J.C."/>
        </authorList>
    </citation>
    <scope>NUCLEOTIDE SEQUENCE [GENOMIC DNA] OF 20-116 (IMGT ALLELE IGHV1-2*01)</scope>
    <scope>VARIANTS ARG-69; ARG-86; SER-89 AND VAL-111</scope>
</reference>
<reference key="6">
    <citation type="journal article" date="1999" name="Exp. Clin. Immunogenet.">
        <title>Protein displays of the human immunoglobulin heavy, kappa and lambda variable and joining regions.</title>
        <authorList>
            <person name="Scaviner D."/>
            <person name="Barbie V."/>
            <person name="Ruiz M."/>
            <person name="Lefranc M.P."/>
        </authorList>
    </citation>
    <scope>REGION</scope>
</reference>
<reference key="7">
    <citation type="journal article" date="2001" name="Exp. Clin. Immunogenet.">
        <title>Nomenclature of the human immunoglobulin heavy (IGH) genes.</title>
        <authorList>
            <person name="Lefranc M.P."/>
        </authorList>
    </citation>
    <scope>NOMENCLATURE</scope>
</reference>
<reference key="8">
    <citation type="book" date="2001" name="The Immunoglobulin FactsBook.">
        <title>The Immunoglobulin FactsBook.</title>
        <editorList>
            <person name="Lefranc M.P."/>
            <person name="Lefranc G."/>
        </editorList>
        <authorList>
            <person name="Lefranc M.P."/>
            <person name="Lefranc G."/>
        </authorList>
    </citation>
    <scope>NOMENCLATURE</scope>
</reference>
<reference key="9">
    <citation type="journal article" date="2007" name="Annu. Rev. Genet.">
        <title>Immunoglobulin somatic hypermutation.</title>
        <authorList>
            <person name="Teng G."/>
            <person name="Papavasiliou F.N."/>
        </authorList>
    </citation>
    <scope>REVIEW ON SOMATIC HYPERMUTATION</scope>
</reference>
<reference key="10">
    <citation type="journal article" date="2010" name="J. Allergy Clin. Immunol.">
        <title>Structure and function of immunoglobulins.</title>
        <authorList>
            <person name="Schroeder H.W. Jr."/>
            <person name="Cavacini L."/>
        </authorList>
    </citation>
    <scope>REVIEW ON IMMUNOGLOBULINS</scope>
</reference>
<reference key="11">
    <citation type="journal article" date="2012" name="Nat. Rev. Immunol.">
        <title>Molecular programming of B cell memory.</title>
        <authorList>
            <person name="McHeyzer-Williams M."/>
            <person name="Okitsu S."/>
            <person name="Wang N."/>
            <person name="McHeyzer-Williams L."/>
        </authorList>
    </citation>
    <scope>REVIEW ON FUNCTION</scope>
</reference>
<reference key="12">
    <citation type="journal article" date="2014" name="Front. Immunol.">
        <title>Immunoglobulin and T Cell Receptor Genes: IMGT((R)) and the Birth and Rise of Immunoinformatics.</title>
        <authorList>
            <person name="Lefranc M.P."/>
        </authorList>
    </citation>
    <scope>NOMENCLATURE</scope>
</reference>
<reference key="13">
    <citation type="journal article" date="2008" name="J. Biol. Chem.">
        <title>Thermodynamic consequences of mutations in vernier zone residues of a humanized anti-human epidermal growth factor receptor murine antibody, 528.</title>
        <authorList>
            <person name="Makabe K."/>
            <person name="Nakanishi T."/>
            <person name="Tsumoto K."/>
            <person name="Tanaka Y."/>
            <person name="Kondo H."/>
            <person name="Umetsu M."/>
            <person name="Sone Y."/>
            <person name="Asano R."/>
            <person name="Kumagai I."/>
        </authorList>
    </citation>
    <scope>X-RAY CRYSTALLOGRAPHY (2.10 ANGSTROMS) OF 20-117</scope>
    <scope>DISULFIDE BOND</scope>
</reference>
<protein>
    <recommendedName>
        <fullName evidence="7 12">Immunoglobulin heavy variable 1-2</fullName>
    </recommendedName>
    <alternativeName>
        <fullName evidence="15">Ig heavy chain V-I region ND</fullName>
    </alternativeName>
    <alternativeName>
        <fullName evidence="14">Ig heavy chain V-I region V35</fullName>
    </alternativeName>
</protein>
<organism>
    <name type="scientific">Homo sapiens</name>
    <name type="common">Human</name>
    <dbReference type="NCBI Taxonomy" id="9606"/>
    <lineage>
        <taxon>Eukaryota</taxon>
        <taxon>Metazoa</taxon>
        <taxon>Chordata</taxon>
        <taxon>Craniata</taxon>
        <taxon>Vertebrata</taxon>
        <taxon>Euteleostomi</taxon>
        <taxon>Mammalia</taxon>
        <taxon>Eutheria</taxon>
        <taxon>Euarchontoglires</taxon>
        <taxon>Primates</taxon>
        <taxon>Haplorrhini</taxon>
        <taxon>Catarrhini</taxon>
        <taxon>Hominidae</taxon>
        <taxon>Homo</taxon>
    </lineage>
</organism>
<proteinExistence type="evidence at protein level"/>
<accession>P23083</accession>
<accession>A0A087WSX2</accession>
<accession>P01744</accession>
<feature type="signal peptide" evidence="5">
    <location>
        <begin position="1"/>
        <end position="19"/>
    </location>
</feature>
<feature type="chain" id="PRO_0000015245" description="Immunoglobulin heavy variable 1-2" evidence="5">
    <location>
        <begin position="20"/>
        <end position="117"/>
    </location>
</feature>
<feature type="domain" description="Ig-like" evidence="1">
    <location>
        <begin position="20"/>
        <end position="117" status="greater than"/>
    </location>
</feature>
<feature type="region of interest" description="Framework-1" evidence="6">
    <location>
        <begin position="20"/>
        <end position="44"/>
    </location>
</feature>
<feature type="region of interest" description="Complementarity-determining-1" evidence="6">
    <location>
        <begin position="45"/>
        <end position="52"/>
    </location>
</feature>
<feature type="region of interest" description="Framework-2" evidence="6">
    <location>
        <begin position="53"/>
        <end position="69"/>
    </location>
</feature>
<feature type="region of interest" description="Complementarity-determining-2" evidence="6">
    <location>
        <begin position="70"/>
        <end position="77"/>
    </location>
</feature>
<feature type="region of interest" description="Framework-3" evidence="6">
    <location>
        <begin position="78"/>
        <end position="115"/>
    </location>
</feature>
<feature type="region of interest" description="Complementarity-determining-3" evidence="6">
    <location>
        <begin position="116"/>
        <end position="117" status="greater than"/>
    </location>
</feature>
<feature type="modified residue" description="Pyrrolidone carboxylic acid" evidence="5">
    <location>
        <position position="20"/>
    </location>
</feature>
<feature type="disulfide bond" evidence="1 2 16">
    <location>
        <begin position="41"/>
        <end position="115"/>
    </location>
</feature>
<feature type="sequence variant" id="VAR_076173" description="In IMGT allele IGHV1-2*01." evidence="3 4">
    <original>W</original>
    <variation>R</variation>
    <location>
        <position position="69"/>
    </location>
</feature>
<feature type="sequence variant" id="VAR_076174" description="In IMGT allele IGHV1-2*01." evidence="3 4">
    <original>W</original>
    <variation>R</variation>
    <location>
        <position position="86"/>
    </location>
</feature>
<feature type="sequence variant" id="VAR_076175" description="In IMGT allele IGHV1-2*01; requires 2 nucleotide substitutions." evidence="3 4">
    <original>M</original>
    <variation>S</variation>
    <location>
        <position position="89"/>
    </location>
</feature>
<feature type="sequence variant" id="VAR_076176" description="In IMGT allele IGHV1-2*01." evidence="3 4">
    <original>A</original>
    <variation>V</variation>
    <location>
        <position position="111"/>
    </location>
</feature>
<feature type="sequence conflict" description="In Ref. 3." evidence="13" ref="3">
    <original>GAHSQV</original>
    <variation>RVHSQT</variation>
    <location>
        <begin position="16"/>
        <end position="21"/>
    </location>
</feature>
<feature type="sequence conflict" description="In Ref. 3." evidence="13" ref="3">
    <original>K</original>
    <variation>R</variation>
    <location>
        <position position="31"/>
    </location>
</feature>
<feature type="sequence conflict" description="In Ref. 3." evidence="13" ref="3">
    <original>K</original>
    <variation>R</variation>
    <location>
        <position position="38"/>
    </location>
</feature>
<feature type="sequence conflict" description="In Ref. 4; AA sequence." evidence="13" ref="4">
    <original>TGYYMHWV</original>
    <variation>IDSYIHWI</variation>
    <location>
        <begin position="49"/>
        <end position="56"/>
    </location>
</feature>
<feature type="sequence conflict" description="In Ref. 4; AA sequence." evidence="13" ref="4">
    <original>MH</original>
    <variation>HI</variation>
    <location>
        <begin position="53"/>
        <end position="54"/>
    </location>
</feature>
<feature type="sequence conflict" description="In Ref. 3." evidence="13" ref="3">
    <original>Q</original>
    <variation>H</variation>
    <location>
        <position position="62"/>
    </location>
</feature>
<feature type="sequence conflict" description="In Ref. 4; AA sequence." evidence="13" ref="4">
    <original>MG</original>
    <variation>GV</variation>
    <location>
        <begin position="67"/>
        <end position="68"/>
    </location>
</feature>
<feature type="sequence conflict" description="In Ref. 3." evidence="13" ref="3">
    <original>M</original>
    <variation>V</variation>
    <location>
        <position position="67"/>
    </location>
</feature>
<feature type="sequence conflict" description="In Ref. 3." evidence="13" ref="3">
    <original>QK</original>
    <variation>PR</variation>
    <location>
        <begin position="81"/>
        <end position="82"/>
    </location>
</feature>
<feature type="sequence conflict" description="In Ref. 3." evidence="13" ref="3">
    <original>TSI</original>
    <variation>ASF</variation>
    <location>
        <begin position="93"/>
        <end position="95"/>
    </location>
</feature>
<feature type="sequence conflict" description="In Ref. 3." evidence="13" ref="3">
    <original>ELSR</original>
    <variation>DLRS</variation>
    <location>
        <begin position="101"/>
        <end position="104"/>
    </location>
</feature>
<feature type="sequence conflict" description="In Ref. 3." evidence="13" ref="3">
    <original>TAVYYCAR</original>
    <variation>SAVFYCAK</variation>
    <location>
        <begin position="110"/>
        <end position="117"/>
    </location>
</feature>
<feature type="non-terminal residue">
    <location>
        <position position="117"/>
    </location>
</feature>
<gene>
    <name evidence="7 12" type="primary">IGHV1-2</name>
</gene>
<dbReference type="EMBL" id="X07448">
    <property type="status" value="NOT_ANNOTATED_CDS"/>
    <property type="molecule type" value="Genomic_DNA"/>
</dbReference>
<dbReference type="EMBL" id="AC246787">
    <property type="status" value="NOT_ANNOTATED_CDS"/>
    <property type="molecule type" value="Genomic_DNA"/>
</dbReference>
<dbReference type="PIR" id="A93933">
    <property type="entry name" value="E1HUND"/>
</dbReference>
<dbReference type="PIR" id="S00476">
    <property type="entry name" value="HVHU35"/>
</dbReference>
<dbReference type="PDB" id="1WT5">
    <property type="method" value="X-ray"/>
    <property type="resolution" value="2.10 A"/>
    <property type="chains" value="A=20-117"/>
</dbReference>
<dbReference type="PDBsum" id="1WT5"/>
<dbReference type="SMR" id="P23083"/>
<dbReference type="FunCoup" id="P23083">
    <property type="interactions" value="386"/>
</dbReference>
<dbReference type="DrugBank" id="DB08294">
    <property type="generic name" value="2-(4-HYDROXY-3-NITROPHENYL)ACETIC ACID"/>
</dbReference>
<dbReference type="DrugBank" id="DB08295">
    <property type="generic name" value="4-HYDROXY-3-NITROPHENYLACETYL-EPSILON-AMINOCAPROIC ACID ANION"/>
</dbReference>
<dbReference type="DrugBank" id="DB08273">
    <property type="generic name" value="4-HYDROXY-5-IODO-3-NITROPHENYLACETYL-EPSILON-AMINOCAPROIC ACID ANION"/>
</dbReference>
<dbReference type="IMGT_GENE-DB" id="IGHV1-2"/>
<dbReference type="CarbonylDB" id="P23083"/>
<dbReference type="BioMuta" id="IGHV1-2"/>
<dbReference type="DMDM" id="123808"/>
<dbReference type="jPOST" id="P23083"/>
<dbReference type="MassIVE" id="P23083"/>
<dbReference type="Ensembl" id="ENST00000390594.3">
    <property type="protein sequence ID" value="ENSP00000375003.2"/>
    <property type="gene ID" value="ENSG00000211934.3"/>
</dbReference>
<dbReference type="Ensembl" id="ENST00000633350.1">
    <property type="protein sequence ID" value="ENSP00000488290.1"/>
    <property type="gene ID" value="ENSG00000282550.1"/>
</dbReference>
<dbReference type="UCSC" id="uc059gfn.1">
    <property type="organism name" value="human"/>
</dbReference>
<dbReference type="AGR" id="HGNC:5550"/>
<dbReference type="GeneCards" id="IGHV1-2"/>
<dbReference type="HGNC" id="HGNC:5550">
    <property type="gene designation" value="IGHV1-2"/>
</dbReference>
<dbReference type="HPA" id="ENSG00000211934">
    <property type="expression patterns" value="Tissue enhanced (intestine, lymphoid tissue)"/>
</dbReference>
<dbReference type="neXtProt" id="NX_P23083"/>
<dbReference type="OpenTargets" id="ENSG00000211934"/>
<dbReference type="VEuPathDB" id="HostDB:ENSG00000211934"/>
<dbReference type="GeneTree" id="ENSGT00950000183013"/>
<dbReference type="InParanoid" id="P23083"/>
<dbReference type="OMA" id="DLTHSCV"/>
<dbReference type="PAN-GO" id="P23083">
    <property type="GO annotations" value="11 GO annotations based on evolutionary models"/>
</dbReference>
<dbReference type="PhylomeDB" id="P23083"/>
<dbReference type="PathwayCommons" id="P23083"/>
<dbReference type="Reactome" id="R-HSA-166663">
    <property type="pathway name" value="Initial triggering of complement"/>
</dbReference>
<dbReference type="Reactome" id="R-HSA-173623">
    <property type="pathway name" value="Classical antibody-mediated complement activation"/>
</dbReference>
<dbReference type="Reactome" id="R-HSA-198933">
    <property type="pathway name" value="Immunoregulatory interactions between a Lymphoid and a non-Lymphoid cell"/>
</dbReference>
<dbReference type="Reactome" id="R-HSA-202733">
    <property type="pathway name" value="Cell surface interactions at the vascular wall"/>
</dbReference>
<dbReference type="Reactome" id="R-HSA-2029481">
    <property type="pathway name" value="FCGR activation"/>
</dbReference>
<dbReference type="Reactome" id="R-HSA-2029482">
    <property type="pathway name" value="Regulation of actin dynamics for phagocytic cup formation"/>
</dbReference>
<dbReference type="Reactome" id="R-HSA-2029485">
    <property type="pathway name" value="Role of phospholipids in phagocytosis"/>
</dbReference>
<dbReference type="Reactome" id="R-HSA-2168880">
    <property type="pathway name" value="Scavenging of heme from plasma"/>
</dbReference>
<dbReference type="Reactome" id="R-HSA-2454202">
    <property type="pathway name" value="Fc epsilon receptor (FCERI) signaling"/>
</dbReference>
<dbReference type="Reactome" id="R-HSA-2730905">
    <property type="pathway name" value="Role of LAT2/NTAL/LAB on calcium mobilization"/>
</dbReference>
<dbReference type="Reactome" id="R-HSA-2871796">
    <property type="pathway name" value="FCERI mediated MAPK activation"/>
</dbReference>
<dbReference type="Reactome" id="R-HSA-2871809">
    <property type="pathway name" value="FCERI mediated Ca+2 mobilization"/>
</dbReference>
<dbReference type="Reactome" id="R-HSA-2871837">
    <property type="pathway name" value="FCERI mediated NF-kB activation"/>
</dbReference>
<dbReference type="Reactome" id="R-HSA-5690714">
    <property type="pathway name" value="CD22 mediated BCR regulation"/>
</dbReference>
<dbReference type="Reactome" id="R-HSA-9664323">
    <property type="pathway name" value="FCGR3A-mediated IL10 synthesis"/>
</dbReference>
<dbReference type="Reactome" id="R-HSA-9664422">
    <property type="pathway name" value="FCGR3A-mediated phagocytosis"/>
</dbReference>
<dbReference type="Reactome" id="R-HSA-9679191">
    <property type="pathway name" value="Potential therapeutics for SARS"/>
</dbReference>
<dbReference type="Reactome" id="R-HSA-977606">
    <property type="pathway name" value="Regulation of Complement cascade"/>
</dbReference>
<dbReference type="Reactome" id="R-HSA-983695">
    <property type="pathway name" value="Antigen activates B Cell Receptor (BCR) leading to generation of second messengers"/>
</dbReference>
<dbReference type="SignaLink" id="P23083"/>
<dbReference type="ChiTaRS" id="IGHV1-2">
    <property type="organism name" value="human"/>
</dbReference>
<dbReference type="Pharos" id="P23083">
    <property type="development level" value="Tdark"/>
</dbReference>
<dbReference type="PRO" id="PR:P23083"/>
<dbReference type="Proteomes" id="UP000005640">
    <property type="component" value="Chromosome 14"/>
</dbReference>
<dbReference type="RNAct" id="P23083">
    <property type="molecule type" value="protein"/>
</dbReference>
<dbReference type="Bgee" id="ENSG00000211934">
    <property type="expression patterns" value="Expressed in vermiform appendix and 87 other cell types or tissues"/>
</dbReference>
<dbReference type="GO" id="GO:0005576">
    <property type="term" value="C:extracellular region"/>
    <property type="evidence" value="ECO:0000304"/>
    <property type="project" value="Reactome"/>
</dbReference>
<dbReference type="GO" id="GO:0019814">
    <property type="term" value="C:immunoglobulin complex"/>
    <property type="evidence" value="ECO:0007669"/>
    <property type="project" value="UniProtKB-KW"/>
</dbReference>
<dbReference type="GO" id="GO:0005886">
    <property type="term" value="C:plasma membrane"/>
    <property type="evidence" value="ECO:0000304"/>
    <property type="project" value="Reactome"/>
</dbReference>
<dbReference type="GO" id="GO:0003823">
    <property type="term" value="F:antigen binding"/>
    <property type="evidence" value="ECO:0000318"/>
    <property type="project" value="GO_Central"/>
</dbReference>
<dbReference type="GO" id="GO:0006955">
    <property type="term" value="P:immune response"/>
    <property type="evidence" value="ECO:0000303"/>
    <property type="project" value="UniProtKB"/>
</dbReference>
<dbReference type="GO" id="GO:0016064">
    <property type="term" value="P:immunoglobulin mediated immune response"/>
    <property type="evidence" value="ECO:0000318"/>
    <property type="project" value="GO_Central"/>
</dbReference>
<dbReference type="CDD" id="cd04981">
    <property type="entry name" value="IgV_H"/>
    <property type="match status" value="1"/>
</dbReference>
<dbReference type="FunFam" id="2.60.40.10:FF:000556">
    <property type="entry name" value="Immunoglobulin heavy variable 7-81 (non-functional)"/>
    <property type="match status" value="1"/>
</dbReference>
<dbReference type="Gene3D" id="2.60.40.10">
    <property type="entry name" value="Immunoglobulins"/>
    <property type="match status" value="1"/>
</dbReference>
<dbReference type="InterPro" id="IPR007110">
    <property type="entry name" value="Ig-like_dom"/>
</dbReference>
<dbReference type="InterPro" id="IPR036179">
    <property type="entry name" value="Ig-like_dom_sf"/>
</dbReference>
<dbReference type="InterPro" id="IPR013783">
    <property type="entry name" value="Ig-like_fold"/>
</dbReference>
<dbReference type="InterPro" id="IPR013106">
    <property type="entry name" value="Ig_V-set"/>
</dbReference>
<dbReference type="InterPro" id="IPR050199">
    <property type="entry name" value="IgHV"/>
</dbReference>
<dbReference type="PANTHER" id="PTHR23266">
    <property type="entry name" value="IMMUNOGLOBULIN HEAVY CHAIN"/>
    <property type="match status" value="1"/>
</dbReference>
<dbReference type="Pfam" id="PF07686">
    <property type="entry name" value="V-set"/>
    <property type="match status" value="1"/>
</dbReference>
<dbReference type="SMART" id="SM00406">
    <property type="entry name" value="IGv"/>
    <property type="match status" value="1"/>
</dbReference>
<dbReference type="SUPFAM" id="SSF48726">
    <property type="entry name" value="Immunoglobulin"/>
    <property type="match status" value="1"/>
</dbReference>
<dbReference type="PROSITE" id="PS50835">
    <property type="entry name" value="IG_LIKE"/>
    <property type="match status" value="1"/>
</dbReference>
<evidence type="ECO:0000255" key="1">
    <source>
        <dbReference type="PROSITE-ProRule" id="PRU00114"/>
    </source>
</evidence>
<evidence type="ECO:0000269" key="2">
    <source>
    </source>
</evidence>
<evidence type="ECO:0000269" key="3">
    <source>
    </source>
</evidence>
<evidence type="ECO:0000269" key="4">
    <source>
    </source>
</evidence>
<evidence type="ECO:0000269" key="5">
    <source ref="4"/>
</evidence>
<evidence type="ECO:0000303" key="6">
    <source>
    </source>
</evidence>
<evidence type="ECO:0000303" key="7">
    <source>
    </source>
</evidence>
<evidence type="ECO:0000303" key="8">
    <source>
    </source>
</evidence>
<evidence type="ECO:0000303" key="9">
    <source>
    </source>
</evidence>
<evidence type="ECO:0000303" key="10">
    <source>
    </source>
</evidence>
<evidence type="ECO:0000303" key="11">
    <source>
    </source>
</evidence>
<evidence type="ECO:0000303" key="12">
    <source ref="8"/>
</evidence>
<evidence type="ECO:0000305" key="13"/>
<evidence type="ECO:0000305" key="14">
    <source>
    </source>
</evidence>
<evidence type="ECO:0000305" key="15">
    <source>
    </source>
</evidence>
<evidence type="ECO:0007744" key="16">
    <source>
        <dbReference type="PDB" id="1WT5"/>
    </source>
</evidence>